<dbReference type="EC" id="3.2.1.15"/>
<dbReference type="EMBL" id="AM270197">
    <property type="protein sequence ID" value="CAK40265.1"/>
    <property type="molecule type" value="Genomic_DNA"/>
</dbReference>
<dbReference type="SMR" id="A2QTU0"/>
<dbReference type="CAZy" id="GH28">
    <property type="family name" value="Glycoside Hydrolase Family 28"/>
</dbReference>
<dbReference type="GlyCosmos" id="A2QTU0">
    <property type="glycosylation" value="4 sites, No reported glycans"/>
</dbReference>
<dbReference type="EnsemblFungi" id="CAK40265">
    <property type="protein sequence ID" value="CAK40265"/>
    <property type="gene ID" value="An09g03260"/>
</dbReference>
<dbReference type="HOGENOM" id="CLU_040116_0_0_1"/>
<dbReference type="Proteomes" id="UP000006706">
    <property type="component" value="Chromosome 1L"/>
</dbReference>
<dbReference type="GO" id="GO:0005576">
    <property type="term" value="C:extracellular region"/>
    <property type="evidence" value="ECO:0000250"/>
    <property type="project" value="UniProtKB"/>
</dbReference>
<dbReference type="GO" id="GO:0004650">
    <property type="term" value="F:polygalacturonase activity"/>
    <property type="evidence" value="ECO:0000250"/>
    <property type="project" value="UniProtKB"/>
</dbReference>
<dbReference type="GO" id="GO:0071555">
    <property type="term" value="P:cell wall organization"/>
    <property type="evidence" value="ECO:0007669"/>
    <property type="project" value="UniProtKB-KW"/>
</dbReference>
<dbReference type="GO" id="GO:0045490">
    <property type="term" value="P:pectin catabolic process"/>
    <property type="evidence" value="ECO:0000250"/>
    <property type="project" value="UniProtKB"/>
</dbReference>
<dbReference type="FunFam" id="2.160.20.10:FF:000002">
    <property type="entry name" value="Endopolygalacturonase D"/>
    <property type="match status" value="1"/>
</dbReference>
<dbReference type="Gene3D" id="2.160.20.10">
    <property type="entry name" value="Single-stranded right-handed beta-helix, Pectin lyase-like"/>
    <property type="match status" value="1"/>
</dbReference>
<dbReference type="InterPro" id="IPR000743">
    <property type="entry name" value="Glyco_hydro_28"/>
</dbReference>
<dbReference type="InterPro" id="IPR050434">
    <property type="entry name" value="Glycosyl_hydrlase_28"/>
</dbReference>
<dbReference type="InterPro" id="IPR006626">
    <property type="entry name" value="PbH1"/>
</dbReference>
<dbReference type="InterPro" id="IPR012334">
    <property type="entry name" value="Pectin_lyas_fold"/>
</dbReference>
<dbReference type="InterPro" id="IPR011050">
    <property type="entry name" value="Pectin_lyase_fold/virulence"/>
</dbReference>
<dbReference type="PANTHER" id="PTHR31884:SF9">
    <property type="entry name" value="ENDOPOLYGALACTURONASE D-RELATED"/>
    <property type="match status" value="1"/>
</dbReference>
<dbReference type="PANTHER" id="PTHR31884">
    <property type="entry name" value="POLYGALACTURONASE"/>
    <property type="match status" value="1"/>
</dbReference>
<dbReference type="Pfam" id="PF00295">
    <property type="entry name" value="Glyco_hydro_28"/>
    <property type="match status" value="1"/>
</dbReference>
<dbReference type="SMART" id="SM00710">
    <property type="entry name" value="PbH1"/>
    <property type="match status" value="6"/>
</dbReference>
<dbReference type="SUPFAM" id="SSF51126">
    <property type="entry name" value="Pectin lyase-like"/>
    <property type="match status" value="1"/>
</dbReference>
<dbReference type="PROSITE" id="PS00502">
    <property type="entry name" value="POLYGALACTURONASE"/>
    <property type="match status" value="1"/>
</dbReference>
<proteinExistence type="inferred from homology"/>
<name>PGLRD_ASPNC</name>
<sequence>MKRSALLASFLPLALGCDSAETHSCASAFSVSSAAAASFCATFTASTVTATTGVPDVFLSNCDYKTKHLSSACSCLGTADGSAPASTPAAPAVSSSSKVGKAPAVAATRTSAIPTTFHTTAVRVPLSTSAAAAVTSQAVLPAQSSVAGNGGTTCTVTEYASISSAVASCSNILLSNINAPASSTIDLTGLQTGAAVIFAGETTFGDTYDSDFDPIVISGTDVTITGEEGHVINGNGEAYWDGEGSNGGQDKPDHFIVVKDMYNSKIENLNILNWPVHCFEIENTEYLTISGLILNNTAGDAANSKSDGDPAAHNTDGFDIKQSDFLTLSNSWVHNQDDCVAVTSGSSIVVDNLYCYGGHGLSIGSIGGKSNNTVDGVTFSNSQVINSENGCRIKSNADTTGEVYNVKYENITLSGISDYGIDIQQDYENGGATGDPTNGVKIENISFVNVKGTMSDGKDYYILCGDGSCSNFVFTDVDITGGSDDSCNYPSSGCP</sequence>
<accession>A2QTU0</accession>
<protein>
    <recommendedName>
        <fullName>Probable endopolygalacturonase D</fullName>
        <shortName>PGD</shortName>
        <ecNumber>3.2.1.15</ecNumber>
    </recommendedName>
    <alternativeName>
        <fullName>Pectinase D</fullName>
    </alternativeName>
    <alternativeName>
        <fullName>Polygalacturonase D</fullName>
    </alternativeName>
</protein>
<reference key="1">
    <citation type="journal article" date="2007" name="Nat. Biotechnol.">
        <title>Genome sequencing and analysis of the versatile cell factory Aspergillus niger CBS 513.88.</title>
        <authorList>
            <person name="Pel H.J."/>
            <person name="de Winde J.H."/>
            <person name="Archer D.B."/>
            <person name="Dyer P.S."/>
            <person name="Hofmann G."/>
            <person name="Schaap P.J."/>
            <person name="Turner G."/>
            <person name="de Vries R.P."/>
            <person name="Albang R."/>
            <person name="Albermann K."/>
            <person name="Andersen M.R."/>
            <person name="Bendtsen J.D."/>
            <person name="Benen J.A.E."/>
            <person name="van den Berg M."/>
            <person name="Breestraat S."/>
            <person name="Caddick M.X."/>
            <person name="Contreras R."/>
            <person name="Cornell M."/>
            <person name="Coutinho P.M."/>
            <person name="Danchin E.G.J."/>
            <person name="Debets A.J.M."/>
            <person name="Dekker P."/>
            <person name="van Dijck P.W.M."/>
            <person name="van Dijk A."/>
            <person name="Dijkhuizen L."/>
            <person name="Driessen A.J.M."/>
            <person name="d'Enfert C."/>
            <person name="Geysens S."/>
            <person name="Goosen C."/>
            <person name="Groot G.S.P."/>
            <person name="de Groot P.W.J."/>
            <person name="Guillemette T."/>
            <person name="Henrissat B."/>
            <person name="Herweijer M."/>
            <person name="van den Hombergh J.P.T.W."/>
            <person name="van den Hondel C.A.M.J.J."/>
            <person name="van der Heijden R.T.J.M."/>
            <person name="van der Kaaij R.M."/>
            <person name="Klis F.M."/>
            <person name="Kools H.J."/>
            <person name="Kubicek C.P."/>
            <person name="van Kuyk P.A."/>
            <person name="Lauber J."/>
            <person name="Lu X."/>
            <person name="van der Maarel M.J.E.C."/>
            <person name="Meulenberg R."/>
            <person name="Menke H."/>
            <person name="Mortimer M.A."/>
            <person name="Nielsen J."/>
            <person name="Oliver S.G."/>
            <person name="Olsthoorn M."/>
            <person name="Pal K."/>
            <person name="van Peij N.N.M.E."/>
            <person name="Ram A.F.J."/>
            <person name="Rinas U."/>
            <person name="Roubos J.A."/>
            <person name="Sagt C.M.J."/>
            <person name="Schmoll M."/>
            <person name="Sun J."/>
            <person name="Ussery D."/>
            <person name="Varga J."/>
            <person name="Vervecken W."/>
            <person name="van de Vondervoort P.J.J."/>
            <person name="Wedler H."/>
            <person name="Woesten H.A.B."/>
            <person name="Zeng A.-P."/>
            <person name="van Ooyen A.J.J."/>
            <person name="Visser J."/>
            <person name="Stam H."/>
        </authorList>
    </citation>
    <scope>NUCLEOTIDE SEQUENCE [LARGE SCALE GENOMIC DNA]</scope>
    <source>
        <strain>ATCC MYA-4892 / CBS 513.88 / FGSC A1513</strain>
    </source>
</reference>
<keyword id="KW-0961">Cell wall biogenesis/degradation</keyword>
<keyword id="KW-1015">Disulfide bond</keyword>
<keyword id="KW-0325">Glycoprotein</keyword>
<keyword id="KW-0326">Glycosidase</keyword>
<keyword id="KW-0378">Hydrolase</keyword>
<keyword id="KW-1185">Reference proteome</keyword>
<keyword id="KW-0677">Repeat</keyword>
<keyword id="KW-0964">Secreted</keyword>
<keyword id="KW-0732">Signal</keyword>
<evidence type="ECO:0000250" key="1"/>
<evidence type="ECO:0000255" key="2"/>
<evidence type="ECO:0000255" key="3">
    <source>
        <dbReference type="PROSITE-ProRule" id="PRU10052"/>
    </source>
</evidence>
<evidence type="ECO:0000305" key="4"/>
<comment type="function">
    <text evidence="1">Involved in maceration and soft-rotting of plant tissue. Hydrolyzes the 1,4-alpha glycosidic bonds of de-esterified pectate in the smooth region of the plant cell wall (By similarity).</text>
</comment>
<comment type="catalytic activity">
    <reaction>
        <text>(1,4-alpha-D-galacturonosyl)n+m + H2O = (1,4-alpha-D-galacturonosyl)n + (1,4-alpha-D-galacturonosyl)m.</text>
        <dbReference type="EC" id="3.2.1.15"/>
    </reaction>
</comment>
<comment type="subcellular location">
    <subcellularLocation>
        <location evidence="1">Secreted</location>
    </subcellularLocation>
</comment>
<comment type="similarity">
    <text evidence="4">Belongs to the glycosyl hydrolase 28 family.</text>
</comment>
<feature type="signal peptide" evidence="2">
    <location>
        <begin position="1"/>
        <end position="16"/>
    </location>
</feature>
<feature type="chain" id="PRO_5000220437" description="Probable endopolygalacturonase D">
    <location>
        <begin position="17"/>
        <end position="495"/>
    </location>
</feature>
<feature type="repeat" description="PbH1 1">
    <location>
        <begin position="261"/>
        <end position="283"/>
    </location>
</feature>
<feature type="repeat" description="PbH1 2">
    <location>
        <begin position="284"/>
        <end position="322"/>
    </location>
</feature>
<feature type="repeat" description="PbH1 3">
    <location>
        <begin position="323"/>
        <end position="344"/>
    </location>
</feature>
<feature type="repeat" description="PbH1 4">
    <location>
        <begin position="374"/>
        <end position="395"/>
    </location>
</feature>
<feature type="repeat" description="PbH1 5">
    <location>
        <begin position="403"/>
        <end position="425"/>
    </location>
</feature>
<feature type="repeat" description="PbH1 6">
    <location>
        <begin position="469"/>
        <end position="492"/>
    </location>
</feature>
<feature type="active site" description="Proton donor" evidence="3">
    <location>
        <position position="337"/>
    </location>
</feature>
<feature type="active site" evidence="3">
    <location>
        <position position="359"/>
    </location>
</feature>
<feature type="glycosylation site" description="N-linked (GlcNAc...) asparagine" evidence="2">
    <location>
        <position position="295"/>
    </location>
</feature>
<feature type="glycosylation site" description="N-linked (GlcNAc...) asparagine" evidence="2">
    <location>
        <position position="371"/>
    </location>
</feature>
<feature type="glycosylation site" description="N-linked (GlcNAc...) asparagine" evidence="2">
    <location>
        <position position="410"/>
    </location>
</feature>
<feature type="glycosylation site" description="N-linked (GlcNAc...) asparagine" evidence="2">
    <location>
        <position position="444"/>
    </location>
</feature>
<feature type="disulfide bond" evidence="1">
    <location>
        <begin position="154"/>
        <end position="169"/>
    </location>
</feature>
<feature type="disulfide bond" evidence="1">
    <location>
        <begin position="339"/>
        <end position="355"/>
    </location>
</feature>
<feature type="disulfide bond" evidence="1">
    <location>
        <begin position="464"/>
        <end position="469"/>
    </location>
</feature>
<feature type="disulfide bond" evidence="1">
    <location>
        <begin position="487"/>
        <end position="494"/>
    </location>
</feature>
<organism>
    <name type="scientific">Aspergillus niger (strain ATCC MYA-4892 / CBS 513.88 / FGSC A1513)</name>
    <dbReference type="NCBI Taxonomy" id="425011"/>
    <lineage>
        <taxon>Eukaryota</taxon>
        <taxon>Fungi</taxon>
        <taxon>Dikarya</taxon>
        <taxon>Ascomycota</taxon>
        <taxon>Pezizomycotina</taxon>
        <taxon>Eurotiomycetes</taxon>
        <taxon>Eurotiomycetidae</taxon>
        <taxon>Eurotiales</taxon>
        <taxon>Aspergillaceae</taxon>
        <taxon>Aspergillus</taxon>
        <taxon>Aspergillus subgen. Circumdati</taxon>
    </lineage>
</organism>
<gene>
    <name type="primary">pgaD</name>
    <name type="ORF">An09g03260</name>
</gene>